<protein>
    <recommendedName>
        <fullName>Calcineurin subunit B type 1</fullName>
    </recommendedName>
    <alternativeName>
        <fullName>Protein phosphatase 2B regulatory subunit 1</fullName>
    </alternativeName>
    <alternativeName>
        <fullName>Protein phosphatase 3 regulatory subunit B alpha isoform 1</fullName>
    </alternativeName>
</protein>
<reference key="1">
    <citation type="submission" date="1992-10" db="EMBL/GenBank/DDBJ databases">
        <title>Regulation of calcineurin phosphatase activity by the B subunit and carboxy-terminal inhibitory domains of the A subunit.</title>
        <authorList>
            <person name="Perrino B.A."/>
            <person name="Huang X."/>
            <person name="Ng L.Y."/>
            <person name="Soderling T.R."/>
        </authorList>
    </citation>
    <scope>NUCLEOTIDE SEQUENCE [MRNA] (ISOFORM 1)</scope>
    <source>
        <strain>Fischer</strain>
    </source>
</reference>
<reference key="2">
    <citation type="journal article" date="1994" name="Biochim. Biophys. Acta">
        <title>cDNA cloning of an alternatively spliced isoform of the regulatory subunit of Ca2+/calmodulin-dependent protein phosphatase (calcineurin B alpha 2).</title>
        <authorList>
            <person name="Chang C.-D."/>
            <person name="Mukai H."/>
            <person name="Kuno T."/>
            <person name="Tanaka C."/>
        </authorList>
    </citation>
    <scope>NUCLEOTIDE SEQUENCE [MRNA] (ISOFORMS 1 AND 2)</scope>
    <scope>TISSUE SPECIFICITY</scope>
    <source>
        <tissue>Brain</tissue>
        <tissue>Testis</tissue>
    </source>
</reference>
<reference key="3">
    <citation type="journal article" date="2004" name="Genome Res.">
        <title>The status, quality, and expansion of the NIH full-length cDNA project: the Mammalian Gene Collection (MGC).</title>
        <authorList>
            <consortium name="The MGC Project Team"/>
        </authorList>
    </citation>
    <scope>NUCLEOTIDE SEQUENCE [LARGE SCALE MRNA] (ISOFORM 1)</scope>
    <source>
        <tissue>Brain</tissue>
    </source>
</reference>
<reference key="4">
    <citation type="submission" date="2007-02" db="UniProtKB">
        <authorList>
            <person name="Lubec G."/>
            <person name="Chen W.-Q."/>
        </authorList>
    </citation>
    <scope>MYRISTOYLATION AT GLY-2</scope>
    <scope>IDENTIFICATION BY MASS SPECTROMETRY</scope>
</reference>
<reference key="5">
    <citation type="journal article" date="2013" name="Cell. Signal.">
        <title>Structural basis of calcineurin activation by calmodulin.</title>
        <authorList>
            <person name="Ye Q."/>
            <person name="Feng Y."/>
            <person name="Yin Y."/>
            <person name="Faucher F."/>
            <person name="Currie M.A."/>
            <person name="Rahman M.N."/>
            <person name="Jin J."/>
            <person name="Li S."/>
            <person name="Wei Q."/>
            <person name="Jia Z."/>
        </authorList>
    </citation>
    <scope>X-RAY CRYSTALLOGRAPHY (3.00 ANGSTROMS) OF 2-170 IN COMPLEX WITH CALCIUM</scope>
    <scope>FUNCTION</scope>
</reference>
<sequence>MGNEASYPLEMCSHFDADEIKRLGKRFKKLDLDNSGSLSVEEFMSLPELQQNPLVQRVIDIFDTDGNGEVDFKEFIEGVSQFSVKGDKEQKLRFAFRIYDMDKDGYISNGELFQVLKMMVGNNLKDTQLQQIVDKTIINADKDGDGRISFEEFCAVVGGLDIHKKMVVDV</sequence>
<gene>
    <name type="primary">Ppp3r1</name>
    <name type="synonym">Cna2</name>
    <name type="synonym">Cnb</name>
</gene>
<comment type="function">
    <text evidence="4">Regulatory subunit of calcineurin, a calcium-dependent, calmodulin stimulated protein phosphatase. Confers calcium sensitivity.</text>
</comment>
<comment type="subunit">
    <text evidence="1 2 9">Forms a complex composed of a calmodulin-dependent catalytic subunit (also known as calcineurin A) and a regulatory Ca(2+)-binding subunit (also known as calcineurin B) (PubMed:24018048). There are three catalytic subunits, each encoded by a separate gene (PPP3CA, PPP3CB, and PPP3CC) and two regulatory subunits which are also encoded by separate genes (PPP3R1 and PPP3R2). The regulatory subunit confers calcium sensitivity. Interacts with catalytic subunit PPP3CA/calcineurin A (PubMed:24018048). Interacts with catalytic subunit PPP3CB/calcineurin A (By similarity). Interacts with CIB1 (via C-terminal region); the interaction increases upon cardiomyocyte hypertrophy. Interacts with RCAN1 (By similarity). Interacts with SPATA33 (via PQIIIT motif) (By similarity).</text>
</comment>
<comment type="subcellular location">
    <subcellularLocation>
        <location evidence="2">Cytoplasm</location>
        <location evidence="2">Cytosol</location>
    </subcellularLocation>
    <subcellularLocation>
        <location evidence="2">Cell membrane</location>
    </subcellularLocation>
    <subcellularLocation>
        <location evidence="2">Cell membrane</location>
        <location evidence="2">Sarcolemma</location>
    </subcellularLocation>
    <subcellularLocation>
        <location evidence="1">Cell membrane</location>
        <topology evidence="1">Lipid-anchor</topology>
    </subcellularLocation>
    <text evidence="2">Translocates from the cytosol to the sarcolemma in a CIB1-dependent manner during cardiomyocyte hypertrophy.</text>
</comment>
<comment type="alternative products">
    <event type="alternative splicing"/>
    <isoform>
        <id>P63100-1</id>
        <id>P06705-1</id>
        <name>1</name>
        <sequence type="displayed"/>
    </isoform>
    <isoform>
        <id>P63100-2</id>
        <id>P06705-2</id>
        <name>2</name>
        <sequence type="described" ref="VSP_000729"/>
    </isoform>
</comment>
<comment type="tissue specificity">
    <text evidence="5">Isoform 2 is testis specific.</text>
</comment>
<comment type="miscellaneous">
    <text evidence="4">This protein has four functional calcium-binding sites.</text>
</comment>
<comment type="similarity">
    <text evidence="8">Belongs to the calcineurin regulatory subunit family.</text>
</comment>
<accession>P63100</accession>
<accession>P06705</accession>
<accession>P15117</accession>
<accession>Q08044</accession>
<keyword id="KW-0002">3D-structure</keyword>
<keyword id="KW-0025">Alternative splicing</keyword>
<keyword id="KW-0106">Calcium</keyword>
<keyword id="KW-1003">Cell membrane</keyword>
<keyword id="KW-0963">Cytoplasm</keyword>
<keyword id="KW-0449">Lipoprotein</keyword>
<keyword id="KW-0472">Membrane</keyword>
<keyword id="KW-0479">Metal-binding</keyword>
<keyword id="KW-0519">Myristate</keyword>
<keyword id="KW-0597">Phosphoprotein</keyword>
<keyword id="KW-1185">Reference proteome</keyword>
<keyword id="KW-0677">Repeat</keyword>
<name>CANB1_RAT</name>
<evidence type="ECO:0000250" key="1">
    <source>
        <dbReference type="UniProtKB" id="P63098"/>
    </source>
</evidence>
<evidence type="ECO:0000250" key="2">
    <source>
        <dbReference type="UniProtKB" id="Q63810"/>
    </source>
</evidence>
<evidence type="ECO:0000255" key="3">
    <source>
        <dbReference type="PROSITE-ProRule" id="PRU00448"/>
    </source>
</evidence>
<evidence type="ECO:0000269" key="4">
    <source>
    </source>
</evidence>
<evidence type="ECO:0000269" key="5">
    <source>
    </source>
</evidence>
<evidence type="ECO:0000269" key="6">
    <source ref="4"/>
</evidence>
<evidence type="ECO:0000303" key="7">
    <source>
    </source>
</evidence>
<evidence type="ECO:0000305" key="8"/>
<evidence type="ECO:0000305" key="9">
    <source>
    </source>
</evidence>
<evidence type="ECO:0007744" key="10">
    <source>
        <dbReference type="PDB" id="4IL1"/>
    </source>
</evidence>
<evidence type="ECO:0007829" key="11">
    <source>
        <dbReference type="PDB" id="4IL1"/>
    </source>
</evidence>
<dbReference type="EMBL" id="L03554">
    <property type="protein sequence ID" value="AAA40854.1"/>
    <property type="molecule type" value="mRNA"/>
</dbReference>
<dbReference type="EMBL" id="D14568">
    <property type="protein sequence ID" value="BAA03422.1"/>
    <property type="molecule type" value="mRNA"/>
</dbReference>
<dbReference type="EMBL" id="D14425">
    <property type="protein sequence ID" value="BAA03318.1"/>
    <property type="molecule type" value="mRNA"/>
</dbReference>
<dbReference type="EMBL" id="BC088855">
    <property type="protein sequence ID" value="AAH88855.1"/>
    <property type="molecule type" value="mRNA"/>
</dbReference>
<dbReference type="PIR" id="S42716">
    <property type="entry name" value="S42716"/>
</dbReference>
<dbReference type="RefSeq" id="NP_059005.1">
    <molecule id="P63100-1"/>
    <property type="nucleotide sequence ID" value="NM_017309.3"/>
</dbReference>
<dbReference type="RefSeq" id="XP_006251579.3">
    <molecule id="P63100-2"/>
    <property type="nucleotide sequence ID" value="XM_006251517.5"/>
</dbReference>
<dbReference type="PDB" id="4IL1">
    <property type="method" value="X-ray"/>
    <property type="resolution" value="3.00 A"/>
    <property type="chains" value="A/B/C/D=2-170"/>
</dbReference>
<dbReference type="PDBsum" id="4IL1"/>
<dbReference type="SMR" id="P63100"/>
<dbReference type="BioGRID" id="248359">
    <property type="interactions" value="3"/>
</dbReference>
<dbReference type="CORUM" id="P63100"/>
<dbReference type="FunCoup" id="P63100">
    <property type="interactions" value="4406"/>
</dbReference>
<dbReference type="IntAct" id="P63100">
    <property type="interactions" value="3"/>
</dbReference>
<dbReference type="MINT" id="P63100"/>
<dbReference type="STRING" id="10116.ENSRNOP00000058834"/>
<dbReference type="iPTMnet" id="P63100"/>
<dbReference type="PhosphoSitePlus" id="P63100"/>
<dbReference type="SwissPalm" id="P63100"/>
<dbReference type="jPOST" id="P63100"/>
<dbReference type="PaxDb" id="10116-ENSRNOP00000037143"/>
<dbReference type="DNASU" id="29748"/>
<dbReference type="GeneID" id="29748"/>
<dbReference type="KEGG" id="rno:29748"/>
<dbReference type="UCSC" id="RGD:69230">
    <property type="organism name" value="rat"/>
</dbReference>
<dbReference type="AGR" id="RGD:69230"/>
<dbReference type="CTD" id="5534"/>
<dbReference type="RGD" id="69230">
    <property type="gene designation" value="Ppp3r1"/>
</dbReference>
<dbReference type="eggNOG" id="KOG0034">
    <property type="taxonomic scope" value="Eukaryota"/>
</dbReference>
<dbReference type="HOGENOM" id="CLU_061288_10_1_1"/>
<dbReference type="InParanoid" id="P63100"/>
<dbReference type="OrthoDB" id="13321at9989"/>
<dbReference type="PhylomeDB" id="P63100"/>
<dbReference type="TreeFam" id="TF105558"/>
<dbReference type="Reactome" id="R-RNO-111447">
    <property type="pathway name" value="Activation of BAD and translocation to mitochondria"/>
</dbReference>
<dbReference type="Reactome" id="R-RNO-2025928">
    <property type="pathway name" value="Calcineurin activates NFAT"/>
</dbReference>
<dbReference type="Reactome" id="R-RNO-2871809">
    <property type="pathway name" value="FCERI mediated Ca+2 mobilization"/>
</dbReference>
<dbReference type="Reactome" id="R-RNO-4086398">
    <property type="pathway name" value="Ca2+ pathway"/>
</dbReference>
<dbReference type="Reactome" id="R-RNO-5607763">
    <property type="pathway name" value="CLEC7A (Dectin-1) induces NFAT activation"/>
</dbReference>
<dbReference type="PRO" id="PR:P63100"/>
<dbReference type="Proteomes" id="UP000002494">
    <property type="component" value="Chromosome 14"/>
</dbReference>
<dbReference type="Bgee" id="ENSRNOG00000043210">
    <property type="expression patterns" value="Expressed in Ammon's horn and 19 other cell types or tissues"/>
</dbReference>
<dbReference type="ExpressionAtlas" id="P63100">
    <property type="expression patterns" value="baseline and differential"/>
</dbReference>
<dbReference type="GO" id="GO:0005955">
    <property type="term" value="C:calcineurin complex"/>
    <property type="evidence" value="ECO:0000266"/>
    <property type="project" value="RGD"/>
</dbReference>
<dbReference type="GO" id="GO:0005829">
    <property type="term" value="C:cytosol"/>
    <property type="evidence" value="ECO:0000304"/>
    <property type="project" value="Reactome"/>
</dbReference>
<dbReference type="GO" id="GO:0098978">
    <property type="term" value="C:glutamatergic synapse"/>
    <property type="evidence" value="ECO:0000266"/>
    <property type="project" value="RGD"/>
</dbReference>
<dbReference type="GO" id="GO:0098686">
    <property type="term" value="C:hippocampal mossy fiber to CA3 synapse"/>
    <property type="evidence" value="ECO:0000266"/>
    <property type="project" value="RGD"/>
</dbReference>
<dbReference type="GO" id="GO:0098688">
    <property type="term" value="C:parallel fiber to Purkinje cell synapse"/>
    <property type="evidence" value="ECO:0000266"/>
    <property type="project" value="RGD"/>
</dbReference>
<dbReference type="GO" id="GO:0098794">
    <property type="term" value="C:postsynapse"/>
    <property type="evidence" value="ECO:0007669"/>
    <property type="project" value="GOC"/>
</dbReference>
<dbReference type="GO" id="GO:0042383">
    <property type="term" value="C:sarcolemma"/>
    <property type="evidence" value="ECO:0000266"/>
    <property type="project" value="RGD"/>
</dbReference>
<dbReference type="GO" id="GO:0098685">
    <property type="term" value="C:Schaffer collateral - CA1 synapse"/>
    <property type="evidence" value="ECO:0000266"/>
    <property type="project" value="RGD"/>
</dbReference>
<dbReference type="GO" id="GO:0045202">
    <property type="term" value="C:synapse"/>
    <property type="evidence" value="ECO:0000266"/>
    <property type="project" value="RGD"/>
</dbReference>
<dbReference type="GO" id="GO:0005509">
    <property type="term" value="F:calcium ion binding"/>
    <property type="evidence" value="ECO:0007669"/>
    <property type="project" value="InterPro"/>
</dbReference>
<dbReference type="GO" id="GO:0008597">
    <property type="term" value="F:calcium-dependent protein serine/threonine phosphatase regulator activity"/>
    <property type="evidence" value="ECO:0000318"/>
    <property type="project" value="GO_Central"/>
</dbReference>
<dbReference type="GO" id="GO:0019902">
    <property type="term" value="F:phosphatase binding"/>
    <property type="evidence" value="ECO:0000266"/>
    <property type="project" value="RGD"/>
</dbReference>
<dbReference type="GO" id="GO:0004721">
    <property type="term" value="F:phosphoprotein phosphatase activity"/>
    <property type="evidence" value="ECO:0000314"/>
    <property type="project" value="RGD"/>
</dbReference>
<dbReference type="GO" id="GO:0019904">
    <property type="term" value="F:protein domain specific binding"/>
    <property type="evidence" value="ECO:0000266"/>
    <property type="project" value="RGD"/>
</dbReference>
<dbReference type="GO" id="GO:0001569">
    <property type="term" value="P:branching involved in blood vessel morphogenesis"/>
    <property type="evidence" value="ECO:0000266"/>
    <property type="project" value="RGD"/>
</dbReference>
<dbReference type="GO" id="GO:0033173">
    <property type="term" value="P:calcineurin-NFAT signaling cascade"/>
    <property type="evidence" value="ECO:0000266"/>
    <property type="project" value="RGD"/>
</dbReference>
<dbReference type="GO" id="GO:0001837">
    <property type="term" value="P:epithelial to mesenchymal transition"/>
    <property type="evidence" value="ECO:0000266"/>
    <property type="project" value="RGD"/>
</dbReference>
<dbReference type="GO" id="GO:0007507">
    <property type="term" value="P:heart development"/>
    <property type="evidence" value="ECO:0000266"/>
    <property type="project" value="RGD"/>
</dbReference>
<dbReference type="GO" id="GO:0060487">
    <property type="term" value="P:lung epithelial cell differentiation"/>
    <property type="evidence" value="ECO:0000266"/>
    <property type="project" value="RGD"/>
</dbReference>
<dbReference type="GO" id="GO:0022011">
    <property type="term" value="P:myelination in peripheral nervous system"/>
    <property type="evidence" value="ECO:0000266"/>
    <property type="project" value="RGD"/>
</dbReference>
<dbReference type="GO" id="GO:0045944">
    <property type="term" value="P:positive regulation of transcription by RNA polymerase II"/>
    <property type="evidence" value="ECO:0000266"/>
    <property type="project" value="RGD"/>
</dbReference>
<dbReference type="GO" id="GO:0099170">
    <property type="term" value="P:postsynaptic modulation of chemical synaptic transmission"/>
    <property type="evidence" value="ECO:0000266"/>
    <property type="project" value="RGD"/>
</dbReference>
<dbReference type="GO" id="GO:0006606">
    <property type="term" value="P:protein import into nucleus"/>
    <property type="evidence" value="ECO:0000266"/>
    <property type="project" value="RGD"/>
</dbReference>
<dbReference type="GO" id="GO:0034504">
    <property type="term" value="P:protein localization to nucleus"/>
    <property type="evidence" value="ECO:0000266"/>
    <property type="project" value="RGD"/>
</dbReference>
<dbReference type="GO" id="GO:0099149">
    <property type="term" value="P:regulation of postsynaptic neurotransmitter receptor internalization"/>
    <property type="evidence" value="ECO:0000266"/>
    <property type="project" value="RGD"/>
</dbReference>
<dbReference type="GO" id="GO:0098693">
    <property type="term" value="P:regulation of synaptic vesicle cycle"/>
    <property type="evidence" value="ECO:0000266"/>
    <property type="project" value="RGD"/>
</dbReference>
<dbReference type="GO" id="GO:0014044">
    <property type="term" value="P:Schwann cell development"/>
    <property type="evidence" value="ECO:0000266"/>
    <property type="project" value="RGD"/>
</dbReference>
<dbReference type="CDD" id="cd00051">
    <property type="entry name" value="EFh"/>
    <property type="match status" value="1"/>
</dbReference>
<dbReference type="FunFam" id="1.10.238.10:FF:000047">
    <property type="entry name" value="Calcineurin subunit B type 1"/>
    <property type="match status" value="1"/>
</dbReference>
<dbReference type="Gene3D" id="1.10.238.10">
    <property type="entry name" value="EF-hand"/>
    <property type="match status" value="1"/>
</dbReference>
<dbReference type="InterPro" id="IPR011992">
    <property type="entry name" value="EF-hand-dom_pair"/>
</dbReference>
<dbReference type="InterPro" id="IPR018247">
    <property type="entry name" value="EF_Hand_1_Ca_BS"/>
</dbReference>
<dbReference type="InterPro" id="IPR002048">
    <property type="entry name" value="EF_hand_dom"/>
</dbReference>
<dbReference type="PANTHER" id="PTHR45942">
    <property type="entry name" value="PROTEIN PHOSPATASE 3 REGULATORY SUBUNIT B ALPHA ISOFORM TYPE 1"/>
    <property type="match status" value="1"/>
</dbReference>
<dbReference type="Pfam" id="PF13499">
    <property type="entry name" value="EF-hand_7"/>
    <property type="match status" value="2"/>
</dbReference>
<dbReference type="PRINTS" id="PR01697">
    <property type="entry name" value="PARVALBUMIN"/>
</dbReference>
<dbReference type="SMART" id="SM00054">
    <property type="entry name" value="EFh"/>
    <property type="match status" value="4"/>
</dbReference>
<dbReference type="SUPFAM" id="SSF47473">
    <property type="entry name" value="EF-hand"/>
    <property type="match status" value="1"/>
</dbReference>
<dbReference type="PROSITE" id="PS00018">
    <property type="entry name" value="EF_HAND_1"/>
    <property type="match status" value="4"/>
</dbReference>
<dbReference type="PROSITE" id="PS50222">
    <property type="entry name" value="EF_HAND_2"/>
    <property type="match status" value="4"/>
</dbReference>
<feature type="initiator methionine" description="Removed" evidence="6">
    <location>
        <position position="1"/>
    </location>
</feature>
<feature type="chain" id="PRO_0000073486" description="Calcineurin subunit B type 1">
    <location>
        <begin position="2"/>
        <end position="170"/>
    </location>
</feature>
<feature type="domain" description="EF-hand 1" evidence="3">
    <location>
        <begin position="18"/>
        <end position="46"/>
    </location>
</feature>
<feature type="domain" description="EF-hand 2" evidence="3">
    <location>
        <begin position="50"/>
        <end position="85"/>
    </location>
</feature>
<feature type="domain" description="EF-hand 3" evidence="3">
    <location>
        <begin position="87"/>
        <end position="122"/>
    </location>
</feature>
<feature type="domain" description="EF-hand 4" evidence="3">
    <location>
        <begin position="128"/>
        <end position="163"/>
    </location>
</feature>
<feature type="region of interest" description="Calcineurin A binding" evidence="1">
    <location>
        <begin position="131"/>
        <end position="136"/>
    </location>
</feature>
<feature type="binding site" evidence="3 4 10">
    <location>
        <position position="31"/>
    </location>
    <ligand>
        <name>Ca(2+)</name>
        <dbReference type="ChEBI" id="CHEBI:29108"/>
        <label>1</label>
    </ligand>
</feature>
<feature type="binding site" evidence="3 4 10">
    <location>
        <position position="33"/>
    </location>
    <ligand>
        <name>Ca(2+)</name>
        <dbReference type="ChEBI" id="CHEBI:29108"/>
        <label>1</label>
    </ligand>
</feature>
<feature type="binding site" evidence="3 4 10">
    <location>
        <position position="35"/>
    </location>
    <ligand>
        <name>Ca(2+)</name>
        <dbReference type="ChEBI" id="CHEBI:29108"/>
        <label>1</label>
    </ligand>
</feature>
<feature type="binding site" evidence="3 4 10">
    <location>
        <position position="37"/>
    </location>
    <ligand>
        <name>Ca(2+)</name>
        <dbReference type="ChEBI" id="CHEBI:29108"/>
        <label>1</label>
    </ligand>
</feature>
<feature type="binding site" evidence="3 4 10">
    <location>
        <position position="42"/>
    </location>
    <ligand>
        <name>Ca(2+)</name>
        <dbReference type="ChEBI" id="CHEBI:29108"/>
        <label>1</label>
    </ligand>
</feature>
<feature type="binding site" evidence="3 4 10">
    <location>
        <position position="63"/>
    </location>
    <ligand>
        <name>Ca(2+)</name>
        <dbReference type="ChEBI" id="CHEBI:29108"/>
        <label>2</label>
    </ligand>
</feature>
<feature type="binding site" evidence="3 4 10">
    <location>
        <position position="65"/>
    </location>
    <ligand>
        <name>Ca(2+)</name>
        <dbReference type="ChEBI" id="CHEBI:29108"/>
        <label>2</label>
    </ligand>
</feature>
<feature type="binding site" evidence="3 4 10">
    <location>
        <position position="67"/>
    </location>
    <ligand>
        <name>Ca(2+)</name>
        <dbReference type="ChEBI" id="CHEBI:29108"/>
        <label>2</label>
    </ligand>
</feature>
<feature type="binding site" evidence="3 4 10">
    <location>
        <position position="69"/>
    </location>
    <ligand>
        <name>Ca(2+)</name>
        <dbReference type="ChEBI" id="CHEBI:29108"/>
        <label>2</label>
    </ligand>
</feature>
<feature type="binding site" evidence="3 4 10">
    <location>
        <position position="74"/>
    </location>
    <ligand>
        <name>Ca(2+)</name>
        <dbReference type="ChEBI" id="CHEBI:29108"/>
        <label>2</label>
    </ligand>
</feature>
<feature type="binding site" evidence="3 4 10">
    <location>
        <position position="100"/>
    </location>
    <ligand>
        <name>Ca(2+)</name>
        <dbReference type="ChEBI" id="CHEBI:29108"/>
        <label>3</label>
    </ligand>
</feature>
<feature type="binding site" evidence="3 4 10">
    <location>
        <position position="102"/>
    </location>
    <ligand>
        <name>Ca(2+)</name>
        <dbReference type="ChEBI" id="CHEBI:29108"/>
        <label>3</label>
    </ligand>
</feature>
<feature type="binding site" evidence="3 4 10">
    <location>
        <position position="104"/>
    </location>
    <ligand>
        <name>Ca(2+)</name>
        <dbReference type="ChEBI" id="CHEBI:29108"/>
        <label>3</label>
    </ligand>
</feature>
<feature type="binding site" evidence="3 4 10">
    <location>
        <position position="106"/>
    </location>
    <ligand>
        <name>Ca(2+)</name>
        <dbReference type="ChEBI" id="CHEBI:29108"/>
        <label>3</label>
    </ligand>
</feature>
<feature type="binding site" evidence="3 4 10">
    <location>
        <position position="111"/>
    </location>
    <ligand>
        <name>Ca(2+)</name>
        <dbReference type="ChEBI" id="CHEBI:29108"/>
        <label>3</label>
    </ligand>
</feature>
<feature type="binding site" evidence="3 4 10">
    <location>
        <position position="141"/>
    </location>
    <ligand>
        <name>Ca(2+)</name>
        <dbReference type="ChEBI" id="CHEBI:29108"/>
        <label>4</label>
    </ligand>
</feature>
<feature type="binding site" evidence="3 4 10">
    <location>
        <position position="143"/>
    </location>
    <ligand>
        <name>Ca(2+)</name>
        <dbReference type="ChEBI" id="CHEBI:29108"/>
        <label>4</label>
    </ligand>
</feature>
<feature type="binding site" evidence="3 4 10">
    <location>
        <position position="145"/>
    </location>
    <ligand>
        <name>Ca(2+)</name>
        <dbReference type="ChEBI" id="CHEBI:29108"/>
        <label>4</label>
    </ligand>
</feature>
<feature type="binding site" evidence="3 4 10">
    <location>
        <position position="147"/>
    </location>
    <ligand>
        <name>Ca(2+)</name>
        <dbReference type="ChEBI" id="CHEBI:29108"/>
        <label>4</label>
    </ligand>
</feature>
<feature type="binding site" evidence="3 4 10">
    <location>
        <position position="152"/>
    </location>
    <ligand>
        <name>Ca(2+)</name>
        <dbReference type="ChEBI" id="CHEBI:29108"/>
        <label>4</label>
    </ligand>
</feature>
<feature type="site" description="Interaction with PxVP motif in substrates of the catalytic subunit" evidence="1">
    <location>
        <position position="118"/>
    </location>
</feature>
<feature type="site" description="Interaction with PxVP motif in substrates of the catalytic subunit" evidence="1">
    <location>
        <position position="122"/>
    </location>
</feature>
<feature type="modified residue" description="Phosphotyrosine" evidence="2">
    <location>
        <position position="106"/>
    </location>
</feature>
<feature type="lipid moiety-binding region" description="N-myristoyl glycine" evidence="6">
    <location>
        <position position="2"/>
    </location>
</feature>
<feature type="splice variant" id="VSP_000729" description="In isoform 2." evidence="7">
    <original>MG</original>
    <variation>MEQGTDLQSQIFFPTEKNFWKKGKDHFRQNKYPFSRELYNLIFADRKG</variation>
    <location>
        <begin position="1"/>
        <end position="2"/>
    </location>
</feature>
<feature type="helix" evidence="11">
    <location>
        <begin position="17"/>
        <end position="30"/>
    </location>
</feature>
<feature type="strand" evidence="11">
    <location>
        <begin position="35"/>
        <end position="38"/>
    </location>
</feature>
<feature type="helix" evidence="11">
    <location>
        <begin position="40"/>
        <end position="43"/>
    </location>
</feature>
<feature type="turn" evidence="11">
    <location>
        <begin position="47"/>
        <end position="51"/>
    </location>
</feature>
<feature type="helix" evidence="11">
    <location>
        <begin position="55"/>
        <end position="62"/>
    </location>
</feature>
<feature type="strand" evidence="11">
    <location>
        <begin position="67"/>
        <end position="71"/>
    </location>
</feature>
<feature type="helix" evidence="11">
    <location>
        <begin position="72"/>
        <end position="80"/>
    </location>
</feature>
<feature type="helix" evidence="11">
    <location>
        <begin position="88"/>
        <end position="99"/>
    </location>
</feature>
<feature type="strand" evidence="11">
    <location>
        <begin position="104"/>
        <end position="107"/>
    </location>
</feature>
<feature type="helix" evidence="11">
    <location>
        <begin position="109"/>
        <end position="120"/>
    </location>
</feature>
<feature type="helix" evidence="11">
    <location>
        <begin position="126"/>
        <end position="140"/>
    </location>
</feature>
<feature type="strand" evidence="11">
    <location>
        <begin position="142"/>
        <end position="148"/>
    </location>
</feature>
<feature type="helix" evidence="11">
    <location>
        <begin position="150"/>
        <end position="157"/>
    </location>
</feature>
<organism>
    <name type="scientific">Rattus norvegicus</name>
    <name type="common">Rat</name>
    <dbReference type="NCBI Taxonomy" id="10116"/>
    <lineage>
        <taxon>Eukaryota</taxon>
        <taxon>Metazoa</taxon>
        <taxon>Chordata</taxon>
        <taxon>Craniata</taxon>
        <taxon>Vertebrata</taxon>
        <taxon>Euteleostomi</taxon>
        <taxon>Mammalia</taxon>
        <taxon>Eutheria</taxon>
        <taxon>Euarchontoglires</taxon>
        <taxon>Glires</taxon>
        <taxon>Rodentia</taxon>
        <taxon>Myomorpha</taxon>
        <taxon>Muroidea</taxon>
        <taxon>Muridae</taxon>
        <taxon>Murinae</taxon>
        <taxon>Rattus</taxon>
    </lineage>
</organism>
<proteinExistence type="evidence at protein level"/>